<sequence>MSDNDQLQQIAHLRREYTKGGLRRRDLPAEPLTLFERWLGQACDARLADPTAMVVATVDDKGQPYQRIVLLKHYDEKGLVFYTNLGSRKAHQIEHNPRISLLFPWHMLERQVMVTGKAERLSTLEVVRYFHSRPRDSQIGAWVSKQSSRISARGILESKFLELKQKFQQGEVPLPSFWGGFRVSIEQMEFWQGGEHRLHDRFLYQRDDGAWKIDRLAP</sequence>
<organism>
    <name type="scientific">Salmonella dublin (strain CT_02021853)</name>
    <dbReference type="NCBI Taxonomy" id="439851"/>
    <lineage>
        <taxon>Bacteria</taxon>
        <taxon>Pseudomonadati</taxon>
        <taxon>Pseudomonadota</taxon>
        <taxon>Gammaproteobacteria</taxon>
        <taxon>Enterobacterales</taxon>
        <taxon>Enterobacteriaceae</taxon>
        <taxon>Salmonella</taxon>
    </lineage>
</organism>
<keyword id="KW-0285">Flavoprotein</keyword>
<keyword id="KW-0288">FMN</keyword>
<keyword id="KW-0560">Oxidoreductase</keyword>
<keyword id="KW-0664">Pyridoxine biosynthesis</keyword>
<feature type="chain" id="PRO_1000186333" description="Pyridoxine/pyridoxamine 5'-phosphate oxidase">
    <location>
        <begin position="1"/>
        <end position="218"/>
    </location>
</feature>
<feature type="binding site" evidence="1">
    <location>
        <begin position="14"/>
        <end position="17"/>
    </location>
    <ligand>
        <name>substrate</name>
    </ligand>
</feature>
<feature type="binding site" evidence="1">
    <location>
        <begin position="67"/>
        <end position="72"/>
    </location>
    <ligand>
        <name>FMN</name>
        <dbReference type="ChEBI" id="CHEBI:58210"/>
    </ligand>
</feature>
<feature type="binding site" evidence="1">
    <location>
        <position position="72"/>
    </location>
    <ligand>
        <name>substrate</name>
    </ligand>
</feature>
<feature type="binding site" evidence="1">
    <location>
        <begin position="82"/>
        <end position="83"/>
    </location>
    <ligand>
        <name>FMN</name>
        <dbReference type="ChEBI" id="CHEBI:58210"/>
    </ligand>
</feature>
<feature type="binding site" evidence="1">
    <location>
        <position position="88"/>
    </location>
    <ligand>
        <name>FMN</name>
        <dbReference type="ChEBI" id="CHEBI:58210"/>
    </ligand>
</feature>
<feature type="binding site" evidence="1">
    <location>
        <position position="89"/>
    </location>
    <ligand>
        <name>FMN</name>
        <dbReference type="ChEBI" id="CHEBI:58210"/>
    </ligand>
</feature>
<feature type="binding site" evidence="1">
    <location>
        <position position="111"/>
    </location>
    <ligand>
        <name>FMN</name>
        <dbReference type="ChEBI" id="CHEBI:58210"/>
    </ligand>
</feature>
<feature type="binding site" evidence="1">
    <location>
        <position position="129"/>
    </location>
    <ligand>
        <name>substrate</name>
    </ligand>
</feature>
<feature type="binding site" evidence="1">
    <location>
        <position position="133"/>
    </location>
    <ligand>
        <name>substrate</name>
    </ligand>
</feature>
<feature type="binding site" evidence="1">
    <location>
        <position position="137"/>
    </location>
    <ligand>
        <name>substrate</name>
    </ligand>
</feature>
<feature type="binding site" evidence="1">
    <location>
        <begin position="146"/>
        <end position="147"/>
    </location>
    <ligand>
        <name>FMN</name>
        <dbReference type="ChEBI" id="CHEBI:58210"/>
    </ligand>
</feature>
<feature type="binding site" evidence="1">
    <location>
        <position position="191"/>
    </location>
    <ligand>
        <name>FMN</name>
        <dbReference type="ChEBI" id="CHEBI:58210"/>
    </ligand>
</feature>
<feature type="binding site" evidence="1">
    <location>
        <begin position="197"/>
        <end position="199"/>
    </location>
    <ligand>
        <name>substrate</name>
    </ligand>
</feature>
<feature type="binding site" evidence="1">
    <location>
        <position position="201"/>
    </location>
    <ligand>
        <name>FMN</name>
        <dbReference type="ChEBI" id="CHEBI:58210"/>
    </ligand>
</feature>
<dbReference type="EC" id="1.4.3.5" evidence="1"/>
<dbReference type="EMBL" id="CP001144">
    <property type="protein sequence ID" value="ACH76170.1"/>
    <property type="molecule type" value="Genomic_DNA"/>
</dbReference>
<dbReference type="RefSeq" id="WP_001282334.1">
    <property type="nucleotide sequence ID" value="NC_011205.1"/>
</dbReference>
<dbReference type="SMR" id="B5FIF5"/>
<dbReference type="KEGG" id="sed:SeD_A1895"/>
<dbReference type="HOGENOM" id="CLU_032263_2_2_6"/>
<dbReference type="UniPathway" id="UPA01068">
    <property type="reaction ID" value="UER00304"/>
</dbReference>
<dbReference type="UniPathway" id="UPA01068">
    <property type="reaction ID" value="UER00305"/>
</dbReference>
<dbReference type="Proteomes" id="UP000008322">
    <property type="component" value="Chromosome"/>
</dbReference>
<dbReference type="GO" id="GO:0010181">
    <property type="term" value="F:FMN binding"/>
    <property type="evidence" value="ECO:0007669"/>
    <property type="project" value="UniProtKB-UniRule"/>
</dbReference>
<dbReference type="GO" id="GO:0004733">
    <property type="term" value="F:pyridoxamine phosphate oxidase activity"/>
    <property type="evidence" value="ECO:0007669"/>
    <property type="project" value="UniProtKB-UniRule"/>
</dbReference>
<dbReference type="GO" id="GO:0008615">
    <property type="term" value="P:pyridoxine biosynthetic process"/>
    <property type="evidence" value="ECO:0007669"/>
    <property type="project" value="UniProtKB-KW"/>
</dbReference>
<dbReference type="FunFam" id="2.30.110.10:FF:000001">
    <property type="entry name" value="Pyridoxine/pyridoxamine 5'-phosphate oxidase"/>
    <property type="match status" value="1"/>
</dbReference>
<dbReference type="Gene3D" id="2.30.110.10">
    <property type="entry name" value="Electron Transport, Fmn-binding Protein, Chain A"/>
    <property type="match status" value="1"/>
</dbReference>
<dbReference type="HAMAP" id="MF_01629">
    <property type="entry name" value="PdxH"/>
    <property type="match status" value="1"/>
</dbReference>
<dbReference type="InterPro" id="IPR000659">
    <property type="entry name" value="Pyridox_Oxase"/>
</dbReference>
<dbReference type="InterPro" id="IPR019740">
    <property type="entry name" value="Pyridox_Oxase_CS"/>
</dbReference>
<dbReference type="InterPro" id="IPR011576">
    <property type="entry name" value="Pyridox_Oxase_N"/>
</dbReference>
<dbReference type="InterPro" id="IPR019576">
    <property type="entry name" value="Pyridoxamine_oxidase_dimer_C"/>
</dbReference>
<dbReference type="InterPro" id="IPR012349">
    <property type="entry name" value="Split_barrel_FMN-bd"/>
</dbReference>
<dbReference type="NCBIfam" id="TIGR00558">
    <property type="entry name" value="pdxH"/>
    <property type="match status" value="1"/>
</dbReference>
<dbReference type="NCBIfam" id="NF004231">
    <property type="entry name" value="PRK05679.1"/>
    <property type="match status" value="1"/>
</dbReference>
<dbReference type="PANTHER" id="PTHR10851:SF0">
    <property type="entry name" value="PYRIDOXINE-5'-PHOSPHATE OXIDASE"/>
    <property type="match status" value="1"/>
</dbReference>
<dbReference type="PANTHER" id="PTHR10851">
    <property type="entry name" value="PYRIDOXINE-5-PHOSPHATE OXIDASE"/>
    <property type="match status" value="1"/>
</dbReference>
<dbReference type="Pfam" id="PF10590">
    <property type="entry name" value="PNP_phzG_C"/>
    <property type="match status" value="1"/>
</dbReference>
<dbReference type="Pfam" id="PF01243">
    <property type="entry name" value="PNPOx_N"/>
    <property type="match status" value="1"/>
</dbReference>
<dbReference type="PIRSF" id="PIRSF000190">
    <property type="entry name" value="Pyd_amn-ph_oxd"/>
    <property type="match status" value="1"/>
</dbReference>
<dbReference type="SUPFAM" id="SSF50475">
    <property type="entry name" value="FMN-binding split barrel"/>
    <property type="match status" value="1"/>
</dbReference>
<dbReference type="PROSITE" id="PS01064">
    <property type="entry name" value="PYRIDOX_OXIDASE"/>
    <property type="match status" value="1"/>
</dbReference>
<proteinExistence type="inferred from homology"/>
<gene>
    <name evidence="1" type="primary">pdxH</name>
    <name type="ordered locus">SeD_A1895</name>
</gene>
<evidence type="ECO:0000255" key="1">
    <source>
        <dbReference type="HAMAP-Rule" id="MF_01629"/>
    </source>
</evidence>
<protein>
    <recommendedName>
        <fullName evidence="1">Pyridoxine/pyridoxamine 5'-phosphate oxidase</fullName>
        <ecNumber evidence="1">1.4.3.5</ecNumber>
    </recommendedName>
    <alternativeName>
        <fullName evidence="1">PNP/PMP oxidase</fullName>
        <shortName evidence="1">PNPOx</shortName>
    </alternativeName>
    <alternativeName>
        <fullName evidence="1">Pyridoxal 5'-phosphate synthase</fullName>
    </alternativeName>
</protein>
<name>PDXH_SALDC</name>
<accession>B5FIF5</accession>
<reference key="1">
    <citation type="journal article" date="2011" name="J. Bacteriol.">
        <title>Comparative genomics of 28 Salmonella enterica isolates: evidence for CRISPR-mediated adaptive sublineage evolution.</title>
        <authorList>
            <person name="Fricke W.F."/>
            <person name="Mammel M.K."/>
            <person name="McDermott P.F."/>
            <person name="Tartera C."/>
            <person name="White D.G."/>
            <person name="Leclerc J.E."/>
            <person name="Ravel J."/>
            <person name="Cebula T.A."/>
        </authorList>
    </citation>
    <scope>NUCLEOTIDE SEQUENCE [LARGE SCALE GENOMIC DNA]</scope>
    <source>
        <strain>CT_02021853</strain>
    </source>
</reference>
<comment type="function">
    <text evidence="1">Catalyzes the oxidation of either pyridoxine 5'-phosphate (PNP) or pyridoxamine 5'-phosphate (PMP) into pyridoxal 5'-phosphate (PLP).</text>
</comment>
<comment type="catalytic activity">
    <reaction evidence="1">
        <text>pyridoxamine 5'-phosphate + O2 + H2O = pyridoxal 5'-phosphate + H2O2 + NH4(+)</text>
        <dbReference type="Rhea" id="RHEA:15817"/>
        <dbReference type="ChEBI" id="CHEBI:15377"/>
        <dbReference type="ChEBI" id="CHEBI:15379"/>
        <dbReference type="ChEBI" id="CHEBI:16240"/>
        <dbReference type="ChEBI" id="CHEBI:28938"/>
        <dbReference type="ChEBI" id="CHEBI:58451"/>
        <dbReference type="ChEBI" id="CHEBI:597326"/>
        <dbReference type="EC" id="1.4.3.5"/>
    </reaction>
</comment>
<comment type="catalytic activity">
    <reaction evidence="1">
        <text>pyridoxine 5'-phosphate + O2 = pyridoxal 5'-phosphate + H2O2</text>
        <dbReference type="Rhea" id="RHEA:15149"/>
        <dbReference type="ChEBI" id="CHEBI:15379"/>
        <dbReference type="ChEBI" id="CHEBI:16240"/>
        <dbReference type="ChEBI" id="CHEBI:58589"/>
        <dbReference type="ChEBI" id="CHEBI:597326"/>
        <dbReference type="EC" id="1.4.3.5"/>
    </reaction>
</comment>
<comment type="cofactor">
    <cofactor evidence="1">
        <name>FMN</name>
        <dbReference type="ChEBI" id="CHEBI:58210"/>
    </cofactor>
    <text evidence="1">Binds 1 FMN per subunit.</text>
</comment>
<comment type="pathway">
    <text evidence="1">Cofactor metabolism; pyridoxal 5'-phosphate salvage; pyridoxal 5'-phosphate from pyridoxamine 5'-phosphate: step 1/1.</text>
</comment>
<comment type="pathway">
    <text evidence="1">Cofactor metabolism; pyridoxal 5'-phosphate salvage; pyridoxal 5'-phosphate from pyridoxine 5'-phosphate: step 1/1.</text>
</comment>
<comment type="subunit">
    <text evidence="1">Homodimer.</text>
</comment>
<comment type="similarity">
    <text evidence="1">Belongs to the pyridoxamine 5'-phosphate oxidase family.</text>
</comment>